<dbReference type="EC" id="2.3.1.274" evidence="1"/>
<dbReference type="EMBL" id="CP000359">
    <property type="protein sequence ID" value="ABF46129.1"/>
    <property type="molecule type" value="Genomic_DNA"/>
</dbReference>
<dbReference type="SMR" id="Q1IXA5"/>
<dbReference type="STRING" id="319795.Dgeo_1834"/>
<dbReference type="KEGG" id="dge:Dgeo_1834"/>
<dbReference type="eggNOG" id="COG0416">
    <property type="taxonomic scope" value="Bacteria"/>
</dbReference>
<dbReference type="HOGENOM" id="CLU_039379_1_1_0"/>
<dbReference type="UniPathway" id="UPA00085"/>
<dbReference type="Proteomes" id="UP000002431">
    <property type="component" value="Chromosome"/>
</dbReference>
<dbReference type="GO" id="GO:0005737">
    <property type="term" value="C:cytoplasm"/>
    <property type="evidence" value="ECO:0007669"/>
    <property type="project" value="UniProtKB-SubCell"/>
</dbReference>
<dbReference type="GO" id="GO:0043811">
    <property type="term" value="F:phosphate:acyl-[acyl carrier protein] acyltransferase activity"/>
    <property type="evidence" value="ECO:0007669"/>
    <property type="project" value="UniProtKB-UniRule"/>
</dbReference>
<dbReference type="GO" id="GO:0006633">
    <property type="term" value="P:fatty acid biosynthetic process"/>
    <property type="evidence" value="ECO:0007669"/>
    <property type="project" value="UniProtKB-UniRule"/>
</dbReference>
<dbReference type="GO" id="GO:0008654">
    <property type="term" value="P:phospholipid biosynthetic process"/>
    <property type="evidence" value="ECO:0007669"/>
    <property type="project" value="UniProtKB-KW"/>
</dbReference>
<dbReference type="Gene3D" id="3.40.718.10">
    <property type="entry name" value="Isopropylmalate Dehydrogenase"/>
    <property type="match status" value="1"/>
</dbReference>
<dbReference type="HAMAP" id="MF_00019">
    <property type="entry name" value="PlsX"/>
    <property type="match status" value="1"/>
</dbReference>
<dbReference type="InterPro" id="IPR003664">
    <property type="entry name" value="FA_synthesis"/>
</dbReference>
<dbReference type="InterPro" id="IPR012281">
    <property type="entry name" value="Phospholipid_synth_PlsX-like"/>
</dbReference>
<dbReference type="NCBIfam" id="TIGR00182">
    <property type="entry name" value="plsX"/>
    <property type="match status" value="1"/>
</dbReference>
<dbReference type="PANTHER" id="PTHR30100">
    <property type="entry name" value="FATTY ACID/PHOSPHOLIPID SYNTHESIS PROTEIN PLSX"/>
    <property type="match status" value="1"/>
</dbReference>
<dbReference type="PANTHER" id="PTHR30100:SF1">
    <property type="entry name" value="PHOSPHATE ACYLTRANSFERASE"/>
    <property type="match status" value="1"/>
</dbReference>
<dbReference type="Pfam" id="PF02504">
    <property type="entry name" value="FA_synthesis"/>
    <property type="match status" value="1"/>
</dbReference>
<dbReference type="PIRSF" id="PIRSF002465">
    <property type="entry name" value="Phsphlp_syn_PlsX"/>
    <property type="match status" value="1"/>
</dbReference>
<dbReference type="SUPFAM" id="SSF53659">
    <property type="entry name" value="Isocitrate/Isopropylmalate dehydrogenase-like"/>
    <property type="match status" value="1"/>
</dbReference>
<protein>
    <recommendedName>
        <fullName evidence="1">Phosphate acyltransferase</fullName>
        <ecNumber evidence="1">2.3.1.274</ecNumber>
    </recommendedName>
    <alternativeName>
        <fullName evidence="1">Acyl-ACP phosphotransacylase</fullName>
    </alternativeName>
    <alternativeName>
        <fullName evidence="1">Acyl-[acyl-carrier-protein]--phosphate acyltransferase</fullName>
    </alternativeName>
    <alternativeName>
        <fullName evidence="1">Phosphate-acyl-ACP acyltransferase</fullName>
    </alternativeName>
</protein>
<name>PLSX_DEIGD</name>
<comment type="function">
    <text evidence="1">Catalyzes the reversible formation of acyl-phosphate (acyl-PO(4)) from acyl-[acyl-carrier-protein] (acyl-ACP). This enzyme utilizes acyl-ACP as fatty acyl donor, but not acyl-CoA.</text>
</comment>
<comment type="catalytic activity">
    <reaction evidence="1">
        <text>a fatty acyl-[ACP] + phosphate = an acyl phosphate + holo-[ACP]</text>
        <dbReference type="Rhea" id="RHEA:42292"/>
        <dbReference type="Rhea" id="RHEA-COMP:9685"/>
        <dbReference type="Rhea" id="RHEA-COMP:14125"/>
        <dbReference type="ChEBI" id="CHEBI:43474"/>
        <dbReference type="ChEBI" id="CHEBI:59918"/>
        <dbReference type="ChEBI" id="CHEBI:64479"/>
        <dbReference type="ChEBI" id="CHEBI:138651"/>
        <dbReference type="EC" id="2.3.1.274"/>
    </reaction>
</comment>
<comment type="pathway">
    <text evidence="1">Lipid metabolism; phospholipid metabolism.</text>
</comment>
<comment type="subunit">
    <text evidence="1">Homodimer. Probably interacts with PlsY.</text>
</comment>
<comment type="subcellular location">
    <subcellularLocation>
        <location evidence="1">Cytoplasm</location>
    </subcellularLocation>
    <text evidence="1">Associated with the membrane possibly through PlsY.</text>
</comment>
<comment type="similarity">
    <text evidence="1">Belongs to the PlsX family.</text>
</comment>
<accession>Q1IXA5</accession>
<organism>
    <name type="scientific">Deinococcus geothermalis (strain DSM 11300 / CIP 105573 / AG-3a)</name>
    <dbReference type="NCBI Taxonomy" id="319795"/>
    <lineage>
        <taxon>Bacteria</taxon>
        <taxon>Thermotogati</taxon>
        <taxon>Deinococcota</taxon>
        <taxon>Deinococci</taxon>
        <taxon>Deinococcales</taxon>
        <taxon>Deinococcaceae</taxon>
        <taxon>Deinococcus</taxon>
    </lineage>
</organism>
<gene>
    <name evidence="1" type="primary">plsX</name>
    <name type="ordered locus">Dgeo_1834</name>
</gene>
<feature type="chain" id="PRO_0000329219" description="Phosphate acyltransferase">
    <location>
        <begin position="1"/>
        <end position="346"/>
    </location>
</feature>
<proteinExistence type="inferred from homology"/>
<keyword id="KW-0963">Cytoplasm</keyword>
<keyword id="KW-0444">Lipid biosynthesis</keyword>
<keyword id="KW-0443">Lipid metabolism</keyword>
<keyword id="KW-0594">Phospholipid biosynthesis</keyword>
<keyword id="KW-1208">Phospholipid metabolism</keyword>
<keyword id="KW-0808">Transferase</keyword>
<evidence type="ECO:0000255" key="1">
    <source>
        <dbReference type="HAMAP-Rule" id="MF_00019"/>
    </source>
</evidence>
<sequence length="346" mass="35808">MPMSAETTSLPAALPIALDAAGGDHGVTPNVEGAVQAARAGVPVLLVGPRVALHAELGKHAGSASLPLTVVDAPDVIGMDEHASDVRSRSGASINVCTQLVKEGKAAAAVSMGHSGATMASALLTLGRLKGVDRPAILTHLPSKKGFVTLLDVGANADVKPVYLAQWARLATVYLQVVEGVQDPTVGLLSIGEEDHKGSQLVLAAHALLRELDGHSIHFYGNVEGRDILQGTTDIVVTDGFTGNVVLKLAEGEAKVLFGWVREALGSRLQTKIGALLVRGALRGLAERMDPSTYGASILLGVRGLTLIGHGSADARAVKNALLRASRAYEAKLIERLEAALTPQDG</sequence>
<reference key="1">
    <citation type="submission" date="2006-04" db="EMBL/GenBank/DDBJ databases">
        <title>Complete sequence of chromosome of Deinococcus geothermalis DSM 11300.</title>
        <authorList>
            <person name="Copeland A."/>
            <person name="Lucas S."/>
            <person name="Lapidus A."/>
            <person name="Barry K."/>
            <person name="Detter J.C."/>
            <person name="Glavina del Rio T."/>
            <person name="Hammon N."/>
            <person name="Israni S."/>
            <person name="Dalin E."/>
            <person name="Tice H."/>
            <person name="Pitluck S."/>
            <person name="Brettin T."/>
            <person name="Bruce D."/>
            <person name="Han C."/>
            <person name="Tapia R."/>
            <person name="Saunders E."/>
            <person name="Gilna P."/>
            <person name="Schmutz J."/>
            <person name="Larimer F."/>
            <person name="Land M."/>
            <person name="Hauser L."/>
            <person name="Kyrpides N."/>
            <person name="Kim E."/>
            <person name="Daly M.J."/>
            <person name="Fredrickson J.K."/>
            <person name="Makarova K.S."/>
            <person name="Gaidamakova E.K."/>
            <person name="Zhai M."/>
            <person name="Richardson P."/>
        </authorList>
    </citation>
    <scope>NUCLEOTIDE SEQUENCE [LARGE SCALE GENOMIC DNA]</scope>
    <source>
        <strain>DSM 11300 / CIP 105573 / AG-3a</strain>
    </source>
</reference>